<organism>
    <name type="scientific">Gossypium hirsutum</name>
    <name type="common">Upland cotton</name>
    <name type="synonym">Gossypium mexicanum</name>
    <dbReference type="NCBI Taxonomy" id="3635"/>
    <lineage>
        <taxon>Eukaryota</taxon>
        <taxon>Viridiplantae</taxon>
        <taxon>Streptophyta</taxon>
        <taxon>Embryophyta</taxon>
        <taxon>Tracheophyta</taxon>
        <taxon>Spermatophyta</taxon>
        <taxon>Magnoliopsida</taxon>
        <taxon>eudicotyledons</taxon>
        <taxon>Gunneridae</taxon>
        <taxon>Pentapetalae</taxon>
        <taxon>rosids</taxon>
        <taxon>malvids</taxon>
        <taxon>Malvales</taxon>
        <taxon>Malvaceae</taxon>
        <taxon>Malvoideae</taxon>
        <taxon>Gossypium</taxon>
    </lineage>
</organism>
<dbReference type="EMBL" id="DQ345959">
    <property type="protein sequence ID" value="ABC73670.1"/>
    <property type="molecule type" value="Genomic_DNA"/>
</dbReference>
<dbReference type="EMBL" id="DQ345959">
    <property type="protein sequence ID" value="ABC73689.1"/>
    <property type="molecule type" value="Genomic_DNA"/>
</dbReference>
<dbReference type="Proteomes" id="UP000189702">
    <property type="component" value="Unplaced"/>
</dbReference>
<dbReference type="GO" id="GO:0009507">
    <property type="term" value="C:chloroplast"/>
    <property type="evidence" value="ECO:0007669"/>
    <property type="project" value="UniProtKB-SubCell"/>
</dbReference>
<dbReference type="InterPro" id="IPR019645">
    <property type="entry name" value="Uncharacterised_Ycf15"/>
</dbReference>
<dbReference type="Pfam" id="PF10705">
    <property type="entry name" value="Ycf15"/>
    <property type="match status" value="1"/>
</dbReference>
<protein>
    <recommendedName>
        <fullName>Putative uncharacterized protein ycf15</fullName>
    </recommendedName>
</protein>
<geneLocation type="chloroplast"/>
<feature type="chain" id="PRO_0000360385" description="Putative uncharacterized protein ycf15">
    <location>
        <begin position="1"/>
        <end position="45"/>
    </location>
</feature>
<comment type="subcellular location">
    <subcellularLocation>
        <location>Plastid</location>
        <location>Chloroplast</location>
    </subcellularLocation>
</comment>
<comment type="similarity">
    <text evidence="1">Belongs to the ycf15 family.</text>
</comment>
<comment type="caution">
    <text evidence="1">Could be the product of a pseudogene.</text>
</comment>
<name>YCF15_GOSHI</name>
<evidence type="ECO:0000305" key="1"/>
<accession>Q2L948</accession>
<reference key="1">
    <citation type="journal article" date="2006" name="BMC Genomics">
        <title>The complete chloroplast genome sequence of Gossypium hirsutum: organization and phylogenetic relationships to other angiosperms.</title>
        <authorList>
            <person name="Lee S.-B."/>
            <person name="Kaittanis C."/>
            <person name="Jansen R.K."/>
            <person name="Hostetler J.B."/>
            <person name="Tallon L.J."/>
            <person name="Town C.D."/>
            <person name="Daniell H."/>
        </authorList>
    </citation>
    <scope>NUCLEOTIDE SEQUENCE [LARGE SCALE GENOMIC DNA]</scope>
    <source>
        <strain>cv. Coker 310FR</strain>
    </source>
</reference>
<sequence length="45" mass="5420">MLLLKHGRIEILDQNTMYGWYELPKQEFLNSEQPELLLTTSKNFH</sequence>
<gene>
    <name type="primary">ycf15-A</name>
</gene>
<gene>
    <name type="primary">ycf15-B</name>
</gene>
<keyword id="KW-0150">Chloroplast</keyword>
<keyword id="KW-0934">Plastid</keyword>
<keyword id="KW-1185">Reference proteome</keyword>
<proteinExistence type="uncertain"/>